<reference key="1">
    <citation type="journal article" date="2003" name="Dev. Dyn.">
        <title>In ovo electroporation of Crim1 in the developing chick spinal cord.</title>
        <authorList>
            <person name="Kolle G.V."/>
            <person name="Jansen A."/>
            <person name="Yamada T."/>
            <person name="Little M.H."/>
        </authorList>
    </citation>
    <scope>NUCLEOTIDE SEQUENCE [MRNA]</scope>
</reference>
<sequence length="1048" mass="114943">MYLAAVSAGRRRPGGDGGGGGGGWHLAAAGWLLLLALLLGQPGTRALVCLPCDESKCEEPKSCPGIIVLGICGCCFMCARQRNESCGGVYGLHGACDRGLRCVIRPPLNGDSITEYEVGVCEDENWDDDQLLGFEPCNENLITGCNIINGKCDCDTIRTCNNPFEFPSRDTCLSALKRIEEEKPDCSKARCEVQFSPRCPEDSILIEGYAPPGECCPLPSRCVCNPAGCLRKVCQPGYLNILVSKASGKPGECCDLYECKPVFSVDCSTVECPPVQQVVCPLDSYETQVRLTADGCCTLPTRCECLSGLCGFPMCEAGSVPQIVSRGDGTPGKCCDVFECVNEVKPTCIFNSMEYYDGDMFRMDACRFCRCQGGVSICFSAQCGELHCDRYYVPEGECCPVCEDPVYPVNNPAGCYANGQIQAHGDRWREDDCTFCQCINGNPHCVATACGQSCLNPVKVPGECCPVCEEPTYITIGPPTCELLVNCTLTEKDCIYSFKLDQNGCRICQCKTREELCTGLISGCSLDCSFGFQTDAHNCEICQCRPRPKKCKPIVCDKYCPFGYLKNKHGCEICRCKKCPEMPCGKICPMGFQQNSHGCVICKCREATASLMPPVKTGSCLSMDGRRHENEESWHDGCRECYCHNGREMCALITCPVPNCGNPTIHPGQCCPSCPDEIIVQKPELTSPSICHAPGGEYFVEGETWNIDSCTQCTCHSGRVLCETEVCPPLLCQNPTRTQDSCCPQCPDEPLQPSLSSNVSMPSYCKNDEGDIFLTAESWKPNVCTSCICMDGVIRCYSESCPPVSCERPVLRKGQCCPYCIEDTVPKKVVCHFNGKTYADEERWDIDSCTHCYCLQGQTLCSTVSCPPLPCAEPINVEGSCCPMCPEMYVPEPTNIPIEKTNHRGDVELEVPNWSTPSENDIIHIHRDMNHLQGEYRSGNGPHPSEDASVSSVALVTVPITIALLVIIVFLLINQKKQWIPVSCYKAPTKPSCLNNQLVYVDCKKGTMVQVDSSQRMLRIADPDSRYSGFYSMQKQNNLQADNFYQTV</sequence>
<gene>
    <name type="primary">CRIM1</name>
</gene>
<keyword id="KW-1015">Disulfide bond</keyword>
<keyword id="KW-0325">Glycoprotein</keyword>
<keyword id="KW-0472">Membrane</keyword>
<keyword id="KW-1185">Reference proteome</keyword>
<keyword id="KW-0677">Repeat</keyword>
<keyword id="KW-0732">Signal</keyword>
<keyword id="KW-0812">Transmembrane</keyword>
<keyword id="KW-1133">Transmembrane helix</keyword>
<comment type="function">
    <text evidence="1">May play a role in CNS development by interacting with growth factors implicated in motor neuron differentiation and survival.</text>
</comment>
<comment type="subcellular location">
    <subcellularLocation>
        <location evidence="1">Membrane</location>
        <topology evidence="1">Single-pass type I membrane protein</topology>
    </subcellularLocation>
</comment>
<comment type="developmental stage">
    <text>Expressed at embryonic stage 20 in the notchcord and weakly in the foor plate and persist until stage 29. Expressed in the motor neuron pool at stage 23. At stage 26 and 29 highly expressed in the ventrolateral neural tube and also in the roof plate.</text>
</comment>
<protein>
    <recommendedName>
        <fullName>Cysteine-rich motor neuron 1 protein</fullName>
        <shortName>CRIM-1</shortName>
    </recommendedName>
</protein>
<accession>Q8AWW5</accession>
<proteinExistence type="evidence at transcript level"/>
<organism>
    <name type="scientific">Gallus gallus</name>
    <name type="common">Chicken</name>
    <dbReference type="NCBI Taxonomy" id="9031"/>
    <lineage>
        <taxon>Eukaryota</taxon>
        <taxon>Metazoa</taxon>
        <taxon>Chordata</taxon>
        <taxon>Craniata</taxon>
        <taxon>Vertebrata</taxon>
        <taxon>Euteleostomi</taxon>
        <taxon>Archelosauria</taxon>
        <taxon>Archosauria</taxon>
        <taxon>Dinosauria</taxon>
        <taxon>Saurischia</taxon>
        <taxon>Theropoda</taxon>
        <taxon>Coelurosauria</taxon>
        <taxon>Aves</taxon>
        <taxon>Neognathae</taxon>
        <taxon>Galloanserae</taxon>
        <taxon>Galliformes</taxon>
        <taxon>Phasianidae</taxon>
        <taxon>Phasianinae</taxon>
        <taxon>Gallus</taxon>
    </lineage>
</organism>
<name>CRIM1_CHICK</name>
<feature type="signal peptide" evidence="2">
    <location>
        <begin position="1"/>
        <end position="46"/>
    </location>
</feature>
<feature type="chain" id="PRO_0000021000" description="Cysteine-rich motor neuron 1 protein">
    <location>
        <begin position="47"/>
        <end position="1048"/>
    </location>
</feature>
<feature type="topological domain" description="Extracellular" evidence="2">
    <location>
        <begin position="47"/>
        <end position="952"/>
    </location>
</feature>
<feature type="transmembrane region" description="Helical" evidence="2">
    <location>
        <begin position="953"/>
        <end position="973"/>
    </location>
</feature>
<feature type="topological domain" description="Cytoplasmic" evidence="2">
    <location>
        <begin position="974"/>
        <end position="1048"/>
    </location>
</feature>
<feature type="domain" description="IGFBP N-terminal" evidence="5">
    <location>
        <begin position="47"/>
        <end position="124"/>
    </location>
</feature>
<feature type="domain" description="VWFC 1" evidence="3">
    <location>
        <begin position="346"/>
        <end position="403"/>
    </location>
</feature>
<feature type="domain" description="VWFC 2" evidence="3">
    <location>
        <begin position="413"/>
        <end position="469"/>
    </location>
</feature>
<feature type="domain" description="Antistasin-like 1" evidence="4">
    <location>
        <begin position="481"/>
        <end position="510"/>
    </location>
</feature>
<feature type="domain" description="Antistasin-like 2" evidence="4">
    <location>
        <begin position="517"/>
        <end position="544"/>
    </location>
</feature>
<feature type="domain" description="Antistasin-like 3" evidence="4">
    <location>
        <begin position="551"/>
        <end position="576"/>
    </location>
</feature>
<feature type="domain" description="Antistasin-like 4" evidence="4">
    <location>
        <begin position="579"/>
        <end position="604"/>
    </location>
</feature>
<feature type="domain" description="VWFC 3" evidence="3">
    <location>
        <begin position="618"/>
        <end position="675"/>
    </location>
</feature>
<feature type="domain" description="VWFC 4" evidence="3">
    <location>
        <begin position="689"/>
        <end position="747"/>
    </location>
</feature>
<feature type="domain" description="VWFC 5" evidence="3">
    <location>
        <begin position="763"/>
        <end position="821"/>
    </location>
</feature>
<feature type="domain" description="VWFC 6" evidence="3">
    <location>
        <begin position="829"/>
        <end position="886"/>
    </location>
</feature>
<feature type="short sequence motif" description="Cell attachment site" evidence="2">
    <location>
        <begin position="326"/>
        <end position="328"/>
    </location>
</feature>
<feature type="short sequence motif" description="Cell attachment site" evidence="2">
    <location>
        <begin position="904"/>
        <end position="906"/>
    </location>
</feature>
<feature type="glycosylation site" description="N-linked (GlcNAc...) asparagine" evidence="2">
    <location>
        <position position="83"/>
    </location>
</feature>
<feature type="glycosylation site" description="N-linked (GlcNAc...) asparagine" evidence="2">
    <location>
        <position position="486"/>
    </location>
</feature>
<feature type="glycosylation site" description="N-linked (GlcNAc...) asparagine" evidence="2">
    <location>
        <position position="758"/>
    </location>
</feature>
<feature type="glycosylation site" description="N-linked (GlcNAc...) asparagine" evidence="2">
    <location>
        <position position="913"/>
    </location>
</feature>
<feature type="disulfide bond" evidence="5">
    <location>
        <begin position="49"/>
        <end position="72"/>
    </location>
</feature>
<feature type="disulfide bond" evidence="5">
    <location>
        <begin position="52"/>
        <end position="74"/>
    </location>
</feature>
<feature type="disulfide bond" evidence="5">
    <location>
        <begin position="57"/>
        <end position="75"/>
    </location>
</feature>
<feature type="disulfide bond" evidence="5">
    <location>
        <begin position="63"/>
        <end position="78"/>
    </location>
</feature>
<feature type="disulfide bond" evidence="5">
    <location>
        <begin position="86"/>
        <end position="102"/>
    </location>
</feature>
<feature type="disulfide bond" evidence="5">
    <location>
        <begin position="96"/>
        <end position="121"/>
    </location>
</feature>
<evidence type="ECO:0000250" key="1"/>
<evidence type="ECO:0000255" key="2"/>
<evidence type="ECO:0000255" key="3">
    <source>
        <dbReference type="PROSITE-ProRule" id="PRU00220"/>
    </source>
</evidence>
<evidence type="ECO:0000255" key="4">
    <source>
        <dbReference type="PROSITE-ProRule" id="PRU00582"/>
    </source>
</evidence>
<evidence type="ECO:0000255" key="5">
    <source>
        <dbReference type="PROSITE-ProRule" id="PRU00653"/>
    </source>
</evidence>
<dbReference type="EMBL" id="AY098584">
    <property type="protein sequence ID" value="AAM28339.1"/>
    <property type="molecule type" value="mRNA"/>
</dbReference>
<dbReference type="RefSeq" id="NP_989756.1">
    <property type="nucleotide sequence ID" value="NM_204425.1"/>
</dbReference>
<dbReference type="SMR" id="Q8AWW5"/>
<dbReference type="FunCoup" id="Q8AWW5">
    <property type="interactions" value="239"/>
</dbReference>
<dbReference type="STRING" id="9031.ENSGALP00000049021"/>
<dbReference type="GlyCosmos" id="Q8AWW5">
    <property type="glycosylation" value="4 sites, No reported glycans"/>
</dbReference>
<dbReference type="GlyGen" id="Q8AWW5">
    <property type="glycosylation" value="5 sites"/>
</dbReference>
<dbReference type="PaxDb" id="9031-ENSGALP00000037171"/>
<dbReference type="GeneID" id="395067"/>
<dbReference type="KEGG" id="gga:395067"/>
<dbReference type="CTD" id="51232"/>
<dbReference type="VEuPathDB" id="HostDB:geneid_395067"/>
<dbReference type="eggNOG" id="KOG1216">
    <property type="taxonomic scope" value="Eukaryota"/>
</dbReference>
<dbReference type="InParanoid" id="Q8AWW5"/>
<dbReference type="OrthoDB" id="5976811at2759"/>
<dbReference type="PhylomeDB" id="Q8AWW5"/>
<dbReference type="PRO" id="PR:Q8AWW5"/>
<dbReference type="Proteomes" id="UP000000539">
    <property type="component" value="Unassembled WGS sequence"/>
</dbReference>
<dbReference type="GO" id="GO:0005576">
    <property type="term" value="C:extracellular region"/>
    <property type="evidence" value="ECO:0007669"/>
    <property type="project" value="InterPro"/>
</dbReference>
<dbReference type="GO" id="GO:0016020">
    <property type="term" value="C:membrane"/>
    <property type="evidence" value="ECO:0007669"/>
    <property type="project" value="UniProtKB-SubCell"/>
</dbReference>
<dbReference type="GO" id="GO:0004867">
    <property type="term" value="F:serine-type endopeptidase inhibitor activity"/>
    <property type="evidence" value="ECO:0007669"/>
    <property type="project" value="InterPro"/>
</dbReference>
<dbReference type="FunFam" id="4.10.40.20:FF:000003">
    <property type="entry name" value="cysteine-rich motor neuron 1 protein isoform X1"/>
    <property type="match status" value="1"/>
</dbReference>
<dbReference type="FunFam" id="2.10.22.10:FF:000001">
    <property type="entry name" value="Cysteine-rich motor neuron 1 protein-like protein"/>
    <property type="match status" value="1"/>
</dbReference>
<dbReference type="Gene3D" id="6.20.200.20">
    <property type="match status" value="6"/>
</dbReference>
<dbReference type="Gene3D" id="2.10.22.10">
    <property type="entry name" value="Antistasin, domain 1"/>
    <property type="match status" value="4"/>
</dbReference>
<dbReference type="InterPro" id="IPR004094">
    <property type="entry name" value="Antistasin-like"/>
</dbReference>
<dbReference type="InterPro" id="IPR052624">
    <property type="entry name" value="CRIM1"/>
</dbReference>
<dbReference type="InterPro" id="IPR045813">
    <property type="entry name" value="CRIM1_C"/>
</dbReference>
<dbReference type="InterPro" id="IPR009030">
    <property type="entry name" value="Growth_fac_rcpt_cys_sf"/>
</dbReference>
<dbReference type="InterPro" id="IPR011061">
    <property type="entry name" value="Hirudin/antistatin"/>
</dbReference>
<dbReference type="InterPro" id="IPR000867">
    <property type="entry name" value="IGFBP-like"/>
</dbReference>
<dbReference type="InterPro" id="IPR001007">
    <property type="entry name" value="VWF_dom"/>
</dbReference>
<dbReference type="PANTHER" id="PTHR46439">
    <property type="entry name" value="CYSTEINE-RICH MOTOR NEURON 1 PROTEIN"/>
    <property type="match status" value="1"/>
</dbReference>
<dbReference type="PANTHER" id="PTHR46439:SF1">
    <property type="entry name" value="CYSTEINE-RICH MOTOR NEURON 1 PROTEIN"/>
    <property type="match status" value="1"/>
</dbReference>
<dbReference type="Pfam" id="PF02822">
    <property type="entry name" value="Antistasin"/>
    <property type="match status" value="4"/>
</dbReference>
<dbReference type="Pfam" id="PF19442">
    <property type="entry name" value="CRIM1_C"/>
    <property type="match status" value="1"/>
</dbReference>
<dbReference type="Pfam" id="PF00219">
    <property type="entry name" value="IGFBP"/>
    <property type="match status" value="1"/>
</dbReference>
<dbReference type="Pfam" id="PF00093">
    <property type="entry name" value="VWC"/>
    <property type="match status" value="6"/>
</dbReference>
<dbReference type="SMART" id="SM00121">
    <property type="entry name" value="IB"/>
    <property type="match status" value="1"/>
</dbReference>
<dbReference type="SMART" id="SM00214">
    <property type="entry name" value="VWC"/>
    <property type="match status" value="6"/>
</dbReference>
<dbReference type="SMART" id="SM00215">
    <property type="entry name" value="VWC_out"/>
    <property type="match status" value="3"/>
</dbReference>
<dbReference type="SUPFAM" id="SSF57603">
    <property type="entry name" value="FnI-like domain"/>
    <property type="match status" value="6"/>
</dbReference>
<dbReference type="SUPFAM" id="SSF57184">
    <property type="entry name" value="Growth factor receptor domain"/>
    <property type="match status" value="1"/>
</dbReference>
<dbReference type="SUPFAM" id="SSF57262">
    <property type="entry name" value="Leech antihemostatic proteins"/>
    <property type="match status" value="3"/>
</dbReference>
<dbReference type="PROSITE" id="PS51252">
    <property type="entry name" value="ANTISTASIN"/>
    <property type="match status" value="4"/>
</dbReference>
<dbReference type="PROSITE" id="PS51323">
    <property type="entry name" value="IGFBP_N_2"/>
    <property type="match status" value="1"/>
</dbReference>
<dbReference type="PROSITE" id="PS01208">
    <property type="entry name" value="VWFC_1"/>
    <property type="match status" value="6"/>
</dbReference>
<dbReference type="PROSITE" id="PS50184">
    <property type="entry name" value="VWFC_2"/>
    <property type="match status" value="6"/>
</dbReference>